<organism>
    <name type="scientific">Staphylococcus aureus (strain JH9)</name>
    <dbReference type="NCBI Taxonomy" id="359786"/>
    <lineage>
        <taxon>Bacteria</taxon>
        <taxon>Bacillati</taxon>
        <taxon>Bacillota</taxon>
        <taxon>Bacilli</taxon>
        <taxon>Bacillales</taxon>
        <taxon>Staphylococcaceae</taxon>
        <taxon>Staphylococcus</taxon>
    </lineage>
</organism>
<comment type="function">
    <text evidence="1">Key enzyme in the regulation of glycerol uptake and metabolism. Catalyzes the phosphorylation of glycerol to yield sn-glycerol 3-phosphate.</text>
</comment>
<comment type="catalytic activity">
    <reaction evidence="1">
        <text>glycerol + ATP = sn-glycerol 3-phosphate + ADP + H(+)</text>
        <dbReference type="Rhea" id="RHEA:21644"/>
        <dbReference type="ChEBI" id="CHEBI:15378"/>
        <dbReference type="ChEBI" id="CHEBI:17754"/>
        <dbReference type="ChEBI" id="CHEBI:30616"/>
        <dbReference type="ChEBI" id="CHEBI:57597"/>
        <dbReference type="ChEBI" id="CHEBI:456216"/>
        <dbReference type="EC" id="2.7.1.30"/>
    </reaction>
</comment>
<comment type="activity regulation">
    <text evidence="1">Activated by phosphorylation and inhibited by fructose 1,6-bisphosphate (FBP).</text>
</comment>
<comment type="pathway">
    <text evidence="1">Polyol metabolism; glycerol degradation via glycerol kinase pathway; sn-glycerol 3-phosphate from glycerol: step 1/1.</text>
</comment>
<comment type="subunit">
    <text evidence="1">Homotetramer and homodimer (in equilibrium).</text>
</comment>
<comment type="PTM">
    <text evidence="1">The phosphoenolpyruvate-dependent sugar phosphotransferase system (PTS), including enzyme I, and histidine-containing protein (HPr) are required for the phosphorylation, which leads to the activation of the enzyme.</text>
</comment>
<comment type="similarity">
    <text evidence="1">Belongs to the FGGY kinase family.</text>
</comment>
<protein>
    <recommendedName>
        <fullName evidence="1">Glycerol kinase</fullName>
        <ecNumber evidence="1">2.7.1.30</ecNumber>
    </recommendedName>
    <alternativeName>
        <fullName evidence="1">ATP:glycerol 3-phosphotransferase</fullName>
    </alternativeName>
    <alternativeName>
        <fullName evidence="1">Glycerokinase</fullName>
        <shortName evidence="1">GK</shortName>
    </alternativeName>
</protein>
<dbReference type="EC" id="2.7.1.30" evidence="1"/>
<dbReference type="EMBL" id="CP000703">
    <property type="protein sequence ID" value="ABQ49155.1"/>
    <property type="molecule type" value="Genomic_DNA"/>
</dbReference>
<dbReference type="RefSeq" id="WP_000417372.1">
    <property type="nucleotide sequence ID" value="NC_009487.1"/>
</dbReference>
<dbReference type="SMR" id="A5ISI2"/>
<dbReference type="KEGG" id="saj:SaurJH9_1359"/>
<dbReference type="HOGENOM" id="CLU_009281_2_3_9"/>
<dbReference type="UniPathway" id="UPA00618">
    <property type="reaction ID" value="UER00672"/>
</dbReference>
<dbReference type="GO" id="GO:0005829">
    <property type="term" value="C:cytosol"/>
    <property type="evidence" value="ECO:0007669"/>
    <property type="project" value="TreeGrafter"/>
</dbReference>
<dbReference type="GO" id="GO:0005524">
    <property type="term" value="F:ATP binding"/>
    <property type="evidence" value="ECO:0007669"/>
    <property type="project" value="UniProtKB-UniRule"/>
</dbReference>
<dbReference type="GO" id="GO:0004370">
    <property type="term" value="F:glycerol kinase activity"/>
    <property type="evidence" value="ECO:0000250"/>
    <property type="project" value="UniProtKB"/>
</dbReference>
<dbReference type="GO" id="GO:0019563">
    <property type="term" value="P:glycerol catabolic process"/>
    <property type="evidence" value="ECO:0007669"/>
    <property type="project" value="UniProtKB-UniRule"/>
</dbReference>
<dbReference type="GO" id="GO:0006071">
    <property type="term" value="P:glycerol metabolic process"/>
    <property type="evidence" value="ECO:0000250"/>
    <property type="project" value="UniProtKB"/>
</dbReference>
<dbReference type="GO" id="GO:0006072">
    <property type="term" value="P:glycerol-3-phosphate metabolic process"/>
    <property type="evidence" value="ECO:0007669"/>
    <property type="project" value="InterPro"/>
</dbReference>
<dbReference type="CDD" id="cd07786">
    <property type="entry name" value="FGGY_EcGK_like"/>
    <property type="match status" value="1"/>
</dbReference>
<dbReference type="FunFam" id="3.30.420.40:FF:000007">
    <property type="entry name" value="Glycerol kinase"/>
    <property type="match status" value="1"/>
</dbReference>
<dbReference type="FunFam" id="3.30.420.40:FF:000008">
    <property type="entry name" value="Glycerol kinase"/>
    <property type="match status" value="1"/>
</dbReference>
<dbReference type="Gene3D" id="3.30.420.40">
    <property type="match status" value="2"/>
</dbReference>
<dbReference type="HAMAP" id="MF_00186">
    <property type="entry name" value="Glycerol_kin"/>
    <property type="match status" value="1"/>
</dbReference>
<dbReference type="InterPro" id="IPR043129">
    <property type="entry name" value="ATPase_NBD"/>
</dbReference>
<dbReference type="InterPro" id="IPR000577">
    <property type="entry name" value="Carb_kinase_FGGY"/>
</dbReference>
<dbReference type="InterPro" id="IPR018483">
    <property type="entry name" value="Carb_kinase_FGGY_CS"/>
</dbReference>
<dbReference type="InterPro" id="IPR018485">
    <property type="entry name" value="FGGY_C"/>
</dbReference>
<dbReference type="InterPro" id="IPR018484">
    <property type="entry name" value="FGGY_N"/>
</dbReference>
<dbReference type="InterPro" id="IPR005999">
    <property type="entry name" value="Glycerol_kin"/>
</dbReference>
<dbReference type="NCBIfam" id="TIGR01311">
    <property type="entry name" value="glycerol_kin"/>
    <property type="match status" value="1"/>
</dbReference>
<dbReference type="NCBIfam" id="NF000756">
    <property type="entry name" value="PRK00047.1"/>
    <property type="match status" value="1"/>
</dbReference>
<dbReference type="PANTHER" id="PTHR10196:SF69">
    <property type="entry name" value="GLYCEROL KINASE"/>
    <property type="match status" value="1"/>
</dbReference>
<dbReference type="PANTHER" id="PTHR10196">
    <property type="entry name" value="SUGAR KINASE"/>
    <property type="match status" value="1"/>
</dbReference>
<dbReference type="Pfam" id="PF02782">
    <property type="entry name" value="FGGY_C"/>
    <property type="match status" value="1"/>
</dbReference>
<dbReference type="Pfam" id="PF00370">
    <property type="entry name" value="FGGY_N"/>
    <property type="match status" value="1"/>
</dbReference>
<dbReference type="PIRSF" id="PIRSF000538">
    <property type="entry name" value="GlpK"/>
    <property type="match status" value="1"/>
</dbReference>
<dbReference type="SUPFAM" id="SSF53067">
    <property type="entry name" value="Actin-like ATPase domain"/>
    <property type="match status" value="2"/>
</dbReference>
<dbReference type="PROSITE" id="PS00445">
    <property type="entry name" value="FGGY_KINASES_2"/>
    <property type="match status" value="1"/>
</dbReference>
<proteinExistence type="inferred from homology"/>
<evidence type="ECO:0000255" key="1">
    <source>
        <dbReference type="HAMAP-Rule" id="MF_00186"/>
    </source>
</evidence>
<feature type="chain" id="PRO_1000077433" description="Glycerol kinase">
    <location>
        <begin position="1"/>
        <end position="498"/>
    </location>
</feature>
<feature type="binding site" evidence="1">
    <location>
        <position position="12"/>
    </location>
    <ligand>
        <name>ADP</name>
        <dbReference type="ChEBI" id="CHEBI:456216"/>
    </ligand>
</feature>
<feature type="binding site" evidence="1">
    <location>
        <position position="12"/>
    </location>
    <ligand>
        <name>ATP</name>
        <dbReference type="ChEBI" id="CHEBI:30616"/>
    </ligand>
</feature>
<feature type="binding site" evidence="1">
    <location>
        <position position="12"/>
    </location>
    <ligand>
        <name>sn-glycerol 3-phosphate</name>
        <dbReference type="ChEBI" id="CHEBI:57597"/>
    </ligand>
</feature>
<feature type="binding site" evidence="1">
    <location>
        <position position="13"/>
    </location>
    <ligand>
        <name>ATP</name>
        <dbReference type="ChEBI" id="CHEBI:30616"/>
    </ligand>
</feature>
<feature type="binding site" evidence="1">
    <location>
        <position position="14"/>
    </location>
    <ligand>
        <name>ATP</name>
        <dbReference type="ChEBI" id="CHEBI:30616"/>
    </ligand>
</feature>
<feature type="binding site" evidence="1">
    <location>
        <position position="16"/>
    </location>
    <ligand>
        <name>ADP</name>
        <dbReference type="ChEBI" id="CHEBI:456216"/>
    </ligand>
</feature>
<feature type="binding site" evidence="1">
    <location>
        <position position="82"/>
    </location>
    <ligand>
        <name>glycerol</name>
        <dbReference type="ChEBI" id="CHEBI:17754"/>
    </ligand>
</feature>
<feature type="binding site" evidence="1">
    <location>
        <position position="82"/>
    </location>
    <ligand>
        <name>sn-glycerol 3-phosphate</name>
        <dbReference type="ChEBI" id="CHEBI:57597"/>
    </ligand>
</feature>
<feature type="binding site" evidence="1">
    <location>
        <position position="83"/>
    </location>
    <ligand>
        <name>glycerol</name>
        <dbReference type="ChEBI" id="CHEBI:17754"/>
    </ligand>
</feature>
<feature type="binding site" evidence="1">
    <location>
        <position position="83"/>
    </location>
    <ligand>
        <name>sn-glycerol 3-phosphate</name>
        <dbReference type="ChEBI" id="CHEBI:57597"/>
    </ligand>
</feature>
<feature type="binding site" evidence="1">
    <location>
        <position position="134"/>
    </location>
    <ligand>
        <name>glycerol</name>
        <dbReference type="ChEBI" id="CHEBI:17754"/>
    </ligand>
</feature>
<feature type="binding site" evidence="1">
    <location>
        <position position="134"/>
    </location>
    <ligand>
        <name>sn-glycerol 3-phosphate</name>
        <dbReference type="ChEBI" id="CHEBI:57597"/>
    </ligand>
</feature>
<feature type="binding site" evidence="1">
    <location>
        <position position="244"/>
    </location>
    <ligand>
        <name>glycerol</name>
        <dbReference type="ChEBI" id="CHEBI:17754"/>
    </ligand>
</feature>
<feature type="binding site" evidence="1">
    <location>
        <position position="244"/>
    </location>
    <ligand>
        <name>sn-glycerol 3-phosphate</name>
        <dbReference type="ChEBI" id="CHEBI:57597"/>
    </ligand>
</feature>
<feature type="binding site" evidence="1">
    <location>
        <position position="245"/>
    </location>
    <ligand>
        <name>glycerol</name>
        <dbReference type="ChEBI" id="CHEBI:17754"/>
    </ligand>
</feature>
<feature type="binding site" evidence="1">
    <location>
        <position position="266"/>
    </location>
    <ligand>
        <name>ADP</name>
        <dbReference type="ChEBI" id="CHEBI:456216"/>
    </ligand>
</feature>
<feature type="binding site" evidence="1">
    <location>
        <position position="266"/>
    </location>
    <ligand>
        <name>ATP</name>
        <dbReference type="ChEBI" id="CHEBI:30616"/>
    </ligand>
</feature>
<feature type="binding site" evidence="1">
    <location>
        <position position="309"/>
    </location>
    <ligand>
        <name>ADP</name>
        <dbReference type="ChEBI" id="CHEBI:456216"/>
    </ligand>
</feature>
<feature type="binding site" evidence="1">
    <location>
        <position position="309"/>
    </location>
    <ligand>
        <name>ATP</name>
        <dbReference type="ChEBI" id="CHEBI:30616"/>
    </ligand>
</feature>
<feature type="binding site" evidence="1">
    <location>
        <position position="313"/>
    </location>
    <ligand>
        <name>ATP</name>
        <dbReference type="ChEBI" id="CHEBI:30616"/>
    </ligand>
</feature>
<feature type="binding site" evidence="1">
    <location>
        <position position="410"/>
    </location>
    <ligand>
        <name>ADP</name>
        <dbReference type="ChEBI" id="CHEBI:456216"/>
    </ligand>
</feature>
<feature type="binding site" evidence="1">
    <location>
        <position position="410"/>
    </location>
    <ligand>
        <name>ATP</name>
        <dbReference type="ChEBI" id="CHEBI:30616"/>
    </ligand>
</feature>
<feature type="binding site" evidence="1">
    <location>
        <position position="414"/>
    </location>
    <ligand>
        <name>ADP</name>
        <dbReference type="ChEBI" id="CHEBI:456216"/>
    </ligand>
</feature>
<feature type="modified residue" description="Phosphohistidine; by HPr" evidence="1">
    <location>
        <position position="230"/>
    </location>
</feature>
<name>GLPK_STAA9</name>
<keyword id="KW-0067">ATP-binding</keyword>
<keyword id="KW-0319">Glycerol metabolism</keyword>
<keyword id="KW-0418">Kinase</keyword>
<keyword id="KW-0547">Nucleotide-binding</keyword>
<keyword id="KW-0597">Phosphoprotein</keyword>
<keyword id="KW-0808">Transferase</keyword>
<accession>A5ISI2</accession>
<sequence>MEKYILSIDQGTTSSRAILFNQKGEIAGVAQREFKQYFPQSGWVEHDANEIWTSVLAVMTEVINENDVRADQIAGIGITNQRETTVVWDKHTGRPIYHAIVWQSRQTQSICSELKQQGYEQTFRDKTGLLLDPYFAGTKVKWILDNVEGAREKAENGDLLFGTIDTWLVWKLSGKAAHITDYSNASRTLMFNIHDLEWDDELLELLTVPKNMLPEVKPSSEIYGKTIDYHFYGQEVPIAGVAGDQQAALFGQACFECGDVKNTYGTGGFMLMNTGDKAVKSESGLLTTIAYGIDGKVNYALEGSIFVSGSAIQWLRDGLRMINSAPQSESYATRVDSTEGVYVVPAFVGLGTPYWDSEARGAIFGLTRGTEKEHFIRATLESLCYQTRDVMEAMSKDSGIDVQSLRVDGGAVKNNFIMQFQADIVNTSVERPEIQETTALGAAFLAGLAVGFWESKDDIAKNWKLEEKFDPKMDEGEREKLYRGWKKAVEATQVFKTE</sequence>
<gene>
    <name evidence="1" type="primary">glpK</name>
    <name type="ordered locus">SaurJH9_1359</name>
</gene>
<reference key="1">
    <citation type="submission" date="2007-05" db="EMBL/GenBank/DDBJ databases">
        <title>Complete sequence of chromosome of Staphylococcus aureus subsp. aureus JH9.</title>
        <authorList>
            <consortium name="US DOE Joint Genome Institute"/>
            <person name="Copeland A."/>
            <person name="Lucas S."/>
            <person name="Lapidus A."/>
            <person name="Barry K."/>
            <person name="Detter J.C."/>
            <person name="Glavina del Rio T."/>
            <person name="Hammon N."/>
            <person name="Israni S."/>
            <person name="Pitluck S."/>
            <person name="Chain P."/>
            <person name="Malfatti S."/>
            <person name="Shin M."/>
            <person name="Vergez L."/>
            <person name="Schmutz J."/>
            <person name="Larimer F."/>
            <person name="Land M."/>
            <person name="Hauser L."/>
            <person name="Kyrpides N."/>
            <person name="Kim E."/>
            <person name="Tomasz A."/>
            <person name="Richardson P."/>
        </authorList>
    </citation>
    <scope>NUCLEOTIDE SEQUENCE [LARGE SCALE GENOMIC DNA]</scope>
    <source>
        <strain>JH9</strain>
    </source>
</reference>